<dbReference type="EMBL" id="U13948">
    <property type="protein sequence ID" value="AAA79972.1"/>
    <property type="molecule type" value="mRNA"/>
</dbReference>
<dbReference type="EMBL" id="AY598745">
    <property type="protein sequence ID" value="AAT47519.1"/>
    <property type="molecule type" value="mRNA"/>
</dbReference>
<dbReference type="EMBL" id="AL161799">
    <property type="status" value="NOT_ANNOTATED_CDS"/>
    <property type="molecule type" value="Genomic_DNA"/>
</dbReference>
<dbReference type="EMBL" id="AL358780">
    <property type="status" value="NOT_ANNOTATED_CDS"/>
    <property type="molecule type" value="Genomic_DNA"/>
</dbReference>
<dbReference type="EMBL" id="AL359697">
    <property type="status" value="NOT_ANNOTATED_CDS"/>
    <property type="molecule type" value="Genomic_DNA"/>
</dbReference>
<dbReference type="EMBL" id="AL357372">
    <property type="status" value="NOT_ANNOTATED_CDS"/>
    <property type="molecule type" value="Genomic_DNA"/>
</dbReference>
<dbReference type="EMBL" id="BC080577">
    <property type="protein sequence ID" value="AAH80577.1"/>
    <property type="molecule type" value="mRNA"/>
</dbReference>
<dbReference type="EMBL" id="BC094844">
    <property type="status" value="NOT_ANNOTATED_CDS"/>
    <property type="molecule type" value="mRNA"/>
</dbReference>
<dbReference type="EMBL" id="BC129946">
    <property type="status" value="NOT_ANNOTATED_CDS"/>
    <property type="molecule type" value="mRNA"/>
</dbReference>
<dbReference type="CCDS" id="CCDS55706.1">
    <molecule id="P55197-2"/>
</dbReference>
<dbReference type="CCDS" id="CCDS55707.1">
    <molecule id="P55197-3"/>
</dbReference>
<dbReference type="CCDS" id="CCDS55708.1">
    <molecule id="P55197-4"/>
</dbReference>
<dbReference type="CCDS" id="CCDS7135.1">
    <molecule id="P55197-1"/>
</dbReference>
<dbReference type="PIR" id="I38759">
    <property type="entry name" value="I38759"/>
</dbReference>
<dbReference type="RefSeq" id="NP_001182555.1">
    <molecule id="P55197-4"/>
    <property type="nucleotide sequence ID" value="NM_001195626.3"/>
</dbReference>
<dbReference type="RefSeq" id="NP_001182556.1">
    <molecule id="P55197-2"/>
    <property type="nucleotide sequence ID" value="NM_001195627.2"/>
</dbReference>
<dbReference type="RefSeq" id="NP_001182557.1">
    <molecule id="P55197-3"/>
    <property type="nucleotide sequence ID" value="NM_001195628.2"/>
</dbReference>
<dbReference type="RefSeq" id="NP_001182559.1">
    <molecule id="P55197-3"/>
    <property type="nucleotide sequence ID" value="NM_001195630.2"/>
</dbReference>
<dbReference type="RefSeq" id="NP_001311225.1">
    <molecule id="P55197-3"/>
    <property type="nucleotide sequence ID" value="NM_001324296.2"/>
</dbReference>
<dbReference type="RefSeq" id="NP_004632.1">
    <molecule id="P55197-1"/>
    <property type="nucleotide sequence ID" value="NM_004641.4"/>
</dbReference>
<dbReference type="PDB" id="5DAG">
    <property type="method" value="X-ray"/>
    <property type="resolution" value="1.60 A"/>
    <property type="chains" value="A=1-208"/>
</dbReference>
<dbReference type="PDB" id="5DAH">
    <property type="method" value="X-ray"/>
    <property type="resolution" value="2.61 A"/>
    <property type="chains" value="A/B=1-208"/>
</dbReference>
<dbReference type="PDB" id="6CKN">
    <property type="method" value="X-ray"/>
    <property type="resolution" value="2.49 A"/>
    <property type="chains" value="A/B=704-779"/>
</dbReference>
<dbReference type="PDB" id="6CKO">
    <property type="method" value="X-ray"/>
    <property type="resolution" value="2.00 A"/>
    <property type="chains" value="A/B=704-779"/>
</dbReference>
<dbReference type="PDB" id="6JN2">
    <property type="method" value="X-ray"/>
    <property type="resolution" value="3.60 A"/>
    <property type="chains" value="A=699-782"/>
</dbReference>
<dbReference type="PDB" id="7MJU">
    <property type="method" value="X-ray"/>
    <property type="resolution" value="2.10 A"/>
    <property type="chains" value="A=19-208"/>
</dbReference>
<dbReference type="PDBsum" id="5DAG"/>
<dbReference type="PDBsum" id="5DAH"/>
<dbReference type="PDBsum" id="6CKN"/>
<dbReference type="PDBsum" id="6CKO"/>
<dbReference type="PDBsum" id="6JN2"/>
<dbReference type="PDBsum" id="7MJU"/>
<dbReference type="SMR" id="P55197"/>
<dbReference type="BioGRID" id="113723">
    <property type="interactions" value="52"/>
</dbReference>
<dbReference type="CORUM" id="P55197"/>
<dbReference type="DIP" id="DIP-37633N"/>
<dbReference type="FunCoup" id="P55197">
    <property type="interactions" value="3421"/>
</dbReference>
<dbReference type="IntAct" id="P55197">
    <property type="interactions" value="42"/>
</dbReference>
<dbReference type="MINT" id="P55197"/>
<dbReference type="STRING" id="9606.ENSP00000307411"/>
<dbReference type="GlyCosmos" id="P55197">
    <property type="glycosylation" value="2 sites, 1 glycan"/>
</dbReference>
<dbReference type="GlyGen" id="P55197">
    <property type="glycosylation" value="9 sites, 1 O-linked glycan (7 sites)"/>
</dbReference>
<dbReference type="iPTMnet" id="P55197"/>
<dbReference type="PhosphoSitePlus" id="P55197"/>
<dbReference type="BioMuta" id="MLLT10"/>
<dbReference type="DMDM" id="527504034"/>
<dbReference type="jPOST" id="P55197"/>
<dbReference type="MassIVE" id="P55197"/>
<dbReference type="PaxDb" id="9606-ENSP00000307411"/>
<dbReference type="PeptideAtlas" id="P55197"/>
<dbReference type="ProteomicsDB" id="3249"/>
<dbReference type="ProteomicsDB" id="56802">
    <molecule id="P55197-4"/>
</dbReference>
<dbReference type="ProteomicsDB" id="56803">
    <molecule id="P55197-2"/>
</dbReference>
<dbReference type="ProteomicsDB" id="65583"/>
<dbReference type="Pumba" id="P55197"/>
<dbReference type="Antibodypedia" id="1417">
    <property type="antibodies" value="383 antibodies from 32 providers"/>
</dbReference>
<dbReference type="DNASU" id="8028"/>
<dbReference type="Ensembl" id="ENST00000307729.12">
    <molecule id="P55197-4"/>
    <property type="protein sequence ID" value="ENSP00000307411.7"/>
    <property type="gene ID" value="ENSG00000078403.17"/>
</dbReference>
<dbReference type="Ensembl" id="ENST00000377059.7">
    <molecule id="P55197-4"/>
    <property type="protein sequence ID" value="ENSP00000366258.4"/>
    <property type="gene ID" value="ENSG00000078403.17"/>
</dbReference>
<dbReference type="Ensembl" id="ENST00000377072.8">
    <molecule id="P55197-1"/>
    <property type="protein sequence ID" value="ENSP00000366272.3"/>
    <property type="gene ID" value="ENSG00000078403.17"/>
</dbReference>
<dbReference type="Ensembl" id="ENST00000377091.7">
    <molecule id="P55197-2"/>
    <property type="protein sequence ID" value="ENSP00000366295.2"/>
    <property type="gene ID" value="ENSG00000078403.17"/>
</dbReference>
<dbReference type="Ensembl" id="ENST00000377100.8">
    <molecule id="P55197-3"/>
    <property type="protein sequence ID" value="ENSP00000366304.3"/>
    <property type="gene ID" value="ENSG00000078403.17"/>
</dbReference>
<dbReference type="Ensembl" id="ENST00000621220.4">
    <molecule id="P55197-2"/>
    <property type="protein sequence ID" value="ENSP00000484335.1"/>
    <property type="gene ID" value="ENSG00000078403.17"/>
</dbReference>
<dbReference type="Ensembl" id="ENST00000631589.1">
    <molecule id="P55197-4"/>
    <property type="protein sequence ID" value="ENSP00000488569.1"/>
    <property type="gene ID" value="ENSG00000078403.17"/>
</dbReference>
<dbReference type="Ensembl" id="ENST00000652497.1">
    <molecule id="P55197-3"/>
    <property type="protein sequence ID" value="ENSP00000498595.1"/>
    <property type="gene ID" value="ENSG00000078403.17"/>
</dbReference>
<dbReference type="GeneID" id="8028"/>
<dbReference type="KEGG" id="hsa:8028"/>
<dbReference type="MANE-Select" id="ENST00000307729.12">
    <property type="protein sequence ID" value="ENSP00000307411.7"/>
    <property type="RefSeq nucleotide sequence ID" value="NM_001195626.3"/>
    <property type="RefSeq protein sequence ID" value="NP_001182555.1"/>
</dbReference>
<dbReference type="UCSC" id="uc001iqq.3">
    <molecule id="P55197-4"/>
    <property type="organism name" value="human"/>
</dbReference>
<dbReference type="AGR" id="HGNC:16063"/>
<dbReference type="CTD" id="8028"/>
<dbReference type="DisGeNET" id="8028"/>
<dbReference type="GeneCards" id="MLLT10"/>
<dbReference type="HGNC" id="HGNC:16063">
    <property type="gene designation" value="MLLT10"/>
</dbReference>
<dbReference type="HPA" id="ENSG00000078403">
    <property type="expression patterns" value="Tissue enhanced (testis)"/>
</dbReference>
<dbReference type="MalaCards" id="MLLT10"/>
<dbReference type="MIM" id="602409">
    <property type="type" value="gene"/>
</dbReference>
<dbReference type="neXtProt" id="NX_P55197"/>
<dbReference type="OpenTargets" id="ENSG00000078403"/>
<dbReference type="Orphanet" id="99861">
    <property type="disease" value="Precursor T-cell acute lymphoblastic leukemia"/>
</dbReference>
<dbReference type="PharmGKB" id="PA30849"/>
<dbReference type="VEuPathDB" id="HostDB:ENSG00000078403"/>
<dbReference type="eggNOG" id="KOG0956">
    <property type="taxonomic scope" value="Eukaryota"/>
</dbReference>
<dbReference type="GeneTree" id="ENSGT00940000157711"/>
<dbReference type="HOGENOM" id="CLU_128812_0_0_1"/>
<dbReference type="InParanoid" id="P55197"/>
<dbReference type="OMA" id="XTCYICD"/>
<dbReference type="OrthoDB" id="20839at2759"/>
<dbReference type="PAN-GO" id="P55197">
    <property type="GO annotations" value="4 GO annotations based on evolutionary models"/>
</dbReference>
<dbReference type="PhylomeDB" id="P55197"/>
<dbReference type="TreeFam" id="TF316118"/>
<dbReference type="PathwayCommons" id="P55197"/>
<dbReference type="SignaLink" id="P55197"/>
<dbReference type="SIGNOR" id="P55197"/>
<dbReference type="BioGRID-ORCS" id="8028">
    <property type="hits" value="21 hits in 1171 CRISPR screens"/>
</dbReference>
<dbReference type="ChiTaRS" id="MLLT10">
    <property type="organism name" value="human"/>
</dbReference>
<dbReference type="EvolutionaryTrace" id="P55197"/>
<dbReference type="GeneWiki" id="MLLT10"/>
<dbReference type="GenomeRNAi" id="8028"/>
<dbReference type="Pharos" id="P55197">
    <property type="development level" value="Tbio"/>
</dbReference>
<dbReference type="PRO" id="PR:P55197"/>
<dbReference type="Proteomes" id="UP000005640">
    <property type="component" value="Chromosome 10"/>
</dbReference>
<dbReference type="RNAct" id="P55197">
    <property type="molecule type" value="protein"/>
</dbReference>
<dbReference type="Bgee" id="ENSG00000078403">
    <property type="expression patterns" value="Expressed in buccal mucosa cell and 187 other cell types or tissues"/>
</dbReference>
<dbReference type="ExpressionAtlas" id="P55197">
    <property type="expression patterns" value="baseline and differential"/>
</dbReference>
<dbReference type="GO" id="GO:0005654">
    <property type="term" value="C:nucleoplasm"/>
    <property type="evidence" value="ECO:0000314"/>
    <property type="project" value="HPA"/>
</dbReference>
<dbReference type="GO" id="GO:0005634">
    <property type="term" value="C:nucleus"/>
    <property type="evidence" value="ECO:0000314"/>
    <property type="project" value="MGI"/>
</dbReference>
<dbReference type="GO" id="GO:0032991">
    <property type="term" value="C:protein-containing complex"/>
    <property type="evidence" value="ECO:0000314"/>
    <property type="project" value="MGI"/>
</dbReference>
<dbReference type="GO" id="GO:0003682">
    <property type="term" value="F:chromatin binding"/>
    <property type="evidence" value="ECO:0000314"/>
    <property type="project" value="UniProtKB"/>
</dbReference>
<dbReference type="GO" id="GO:0003677">
    <property type="term" value="F:DNA binding"/>
    <property type="evidence" value="ECO:0007669"/>
    <property type="project" value="UniProtKB-KW"/>
</dbReference>
<dbReference type="GO" id="GO:0042393">
    <property type="term" value="F:histone binding"/>
    <property type="evidence" value="ECO:0000353"/>
    <property type="project" value="UniProtKB"/>
</dbReference>
<dbReference type="GO" id="GO:0031491">
    <property type="term" value="F:nucleosome binding"/>
    <property type="evidence" value="ECO:0000314"/>
    <property type="project" value="UniProtKB"/>
</dbReference>
<dbReference type="GO" id="GO:0008270">
    <property type="term" value="F:zinc ion binding"/>
    <property type="evidence" value="ECO:0007669"/>
    <property type="project" value="UniProtKB-KW"/>
</dbReference>
<dbReference type="GO" id="GO:0045944">
    <property type="term" value="P:positive regulation of transcription by RNA polymerase II"/>
    <property type="evidence" value="ECO:0000314"/>
    <property type="project" value="UniProtKB"/>
</dbReference>
<dbReference type="GO" id="GO:0006357">
    <property type="term" value="P:regulation of transcription by RNA polymerase II"/>
    <property type="evidence" value="ECO:0000318"/>
    <property type="project" value="GO_Central"/>
</dbReference>
<dbReference type="CDD" id="cd20901">
    <property type="entry name" value="CC_AF10"/>
    <property type="match status" value="1"/>
</dbReference>
<dbReference type="CDD" id="cd15708">
    <property type="entry name" value="ePHD_AF10"/>
    <property type="match status" value="1"/>
</dbReference>
<dbReference type="CDD" id="cd15574">
    <property type="entry name" value="PHD_AF10_AF17"/>
    <property type="match status" value="1"/>
</dbReference>
<dbReference type="DisProt" id="DP02852"/>
<dbReference type="FunFam" id="3.30.40.10:FF:000042">
    <property type="entry name" value="protein AF-10 isoform X1"/>
    <property type="match status" value="1"/>
</dbReference>
<dbReference type="FunFam" id="3.30.40.10:FF:000053">
    <property type="entry name" value="protein AF-10 isoform X2"/>
    <property type="match status" value="1"/>
</dbReference>
<dbReference type="Gene3D" id="3.30.40.10">
    <property type="entry name" value="Zinc/RING finger domain, C3HC4 (zinc finger)"/>
    <property type="match status" value="2"/>
</dbReference>
<dbReference type="InterPro" id="IPR049773">
    <property type="entry name" value="AF10-like_CC"/>
</dbReference>
<dbReference type="InterPro" id="IPR049781">
    <property type="entry name" value="AF10/AF17_PHD"/>
</dbReference>
<dbReference type="InterPro" id="IPR049775">
    <property type="entry name" value="AF10_ePHD"/>
</dbReference>
<dbReference type="InterPro" id="IPR034732">
    <property type="entry name" value="EPHD"/>
</dbReference>
<dbReference type="InterPro" id="IPR050701">
    <property type="entry name" value="Histone_Mod_Regulator"/>
</dbReference>
<dbReference type="InterPro" id="IPR019786">
    <property type="entry name" value="Zinc_finger_PHD-type_CS"/>
</dbReference>
<dbReference type="InterPro" id="IPR011011">
    <property type="entry name" value="Znf_FYVE_PHD"/>
</dbReference>
<dbReference type="InterPro" id="IPR001965">
    <property type="entry name" value="Znf_PHD"/>
</dbReference>
<dbReference type="InterPro" id="IPR019787">
    <property type="entry name" value="Znf_PHD-finger"/>
</dbReference>
<dbReference type="InterPro" id="IPR013083">
    <property type="entry name" value="Znf_RING/FYVE/PHD"/>
</dbReference>
<dbReference type="PANTHER" id="PTHR13793">
    <property type="entry name" value="PHD FINGER PROTEINS"/>
    <property type="match status" value="1"/>
</dbReference>
<dbReference type="PANTHER" id="PTHR13793:SF93">
    <property type="entry name" value="PROTEIN AF-10"/>
    <property type="match status" value="1"/>
</dbReference>
<dbReference type="Pfam" id="PF13831">
    <property type="entry name" value="PHD_2"/>
    <property type="match status" value="1"/>
</dbReference>
<dbReference type="Pfam" id="PF13832">
    <property type="entry name" value="zf-HC5HC2H_2"/>
    <property type="match status" value="1"/>
</dbReference>
<dbReference type="SMART" id="SM00249">
    <property type="entry name" value="PHD"/>
    <property type="match status" value="2"/>
</dbReference>
<dbReference type="SUPFAM" id="SSF57903">
    <property type="entry name" value="FYVE/PHD zinc finger"/>
    <property type="match status" value="1"/>
</dbReference>
<dbReference type="PROSITE" id="PS51805">
    <property type="entry name" value="EPHD"/>
    <property type="match status" value="1"/>
</dbReference>
<dbReference type="PROSITE" id="PS01359">
    <property type="entry name" value="ZF_PHD_1"/>
    <property type="match status" value="1"/>
</dbReference>
<dbReference type="PROSITE" id="PS50016">
    <property type="entry name" value="ZF_PHD_2"/>
    <property type="match status" value="1"/>
</dbReference>
<gene>
    <name evidence="15" type="primary">MLLT10</name>
    <name evidence="11" type="synonym">AF10</name>
</gene>
<feature type="chain" id="PRO_0000215935" description="Protein AF-10">
    <location>
        <begin position="1"/>
        <end position="1068"/>
    </location>
</feature>
<feature type="zinc finger region" description="PHD-type 1" evidence="2">
    <location>
        <begin position="22"/>
        <end position="74"/>
    </location>
</feature>
<feature type="zinc finger region" description="C2HC pre-PHD-type" evidence="3">
    <location>
        <begin position="79"/>
        <end position="112"/>
    </location>
</feature>
<feature type="zinc finger region" description="PHD-type 2" evidence="3">
    <location>
        <begin position="135"/>
        <end position="198"/>
    </location>
</feature>
<feature type="region of interest" description="Self-association">
    <location>
        <begin position="80"/>
        <end position="287"/>
    </location>
</feature>
<feature type="region of interest" description="Required for interaction with histone H3" evidence="10">
    <location>
        <begin position="106"/>
        <end position="190"/>
    </location>
</feature>
<feature type="region of interest" description="Interaction with FSTL3" evidence="9">
    <location>
        <begin position="141"/>
        <end position="233"/>
    </location>
</feature>
<feature type="region of interest" description="Disordered" evidence="4">
    <location>
        <begin position="206"/>
        <end position="260"/>
    </location>
</feature>
<feature type="region of interest" description="Disordered" evidence="4">
    <location>
        <begin position="291"/>
        <end position="505"/>
    </location>
</feature>
<feature type="region of interest" description="DNA-binding">
    <location>
        <begin position="311"/>
        <end position="674"/>
    </location>
</feature>
<feature type="region of interest" description="Disordered" evidence="4">
    <location>
        <begin position="583"/>
        <end position="612"/>
    </location>
</feature>
<feature type="region of interest" description="Disordered" evidence="4">
    <location>
        <begin position="660"/>
        <end position="708"/>
    </location>
</feature>
<feature type="region of interest" description="Transactivation domain; required for DOT1L-binding">
    <location>
        <begin position="703"/>
        <end position="784"/>
    </location>
</feature>
<feature type="region of interest" description="Leucine-zipper">
    <location>
        <begin position="750"/>
        <end position="778"/>
    </location>
</feature>
<feature type="region of interest" description="Disordered" evidence="4">
    <location>
        <begin position="800"/>
        <end position="865"/>
    </location>
</feature>
<feature type="compositionally biased region" description="Low complexity" evidence="4">
    <location>
        <begin position="211"/>
        <end position="222"/>
    </location>
</feature>
<feature type="compositionally biased region" description="Basic and acidic residues" evidence="4">
    <location>
        <begin position="223"/>
        <end position="240"/>
    </location>
</feature>
<feature type="compositionally biased region" description="Polar residues" evidence="4">
    <location>
        <begin position="291"/>
        <end position="305"/>
    </location>
</feature>
<feature type="compositionally biased region" description="Basic and acidic residues" evidence="4">
    <location>
        <begin position="306"/>
        <end position="317"/>
    </location>
</feature>
<feature type="compositionally biased region" description="Low complexity" evidence="4">
    <location>
        <begin position="352"/>
        <end position="372"/>
    </location>
</feature>
<feature type="compositionally biased region" description="Polar residues" evidence="4">
    <location>
        <begin position="387"/>
        <end position="396"/>
    </location>
</feature>
<feature type="compositionally biased region" description="Polar residues" evidence="4">
    <location>
        <begin position="404"/>
        <end position="446"/>
    </location>
</feature>
<feature type="compositionally biased region" description="Basic residues" evidence="4">
    <location>
        <begin position="465"/>
        <end position="483"/>
    </location>
</feature>
<feature type="compositionally biased region" description="Low complexity" evidence="4">
    <location>
        <begin position="490"/>
        <end position="505"/>
    </location>
</feature>
<feature type="compositionally biased region" description="Low complexity" evidence="4">
    <location>
        <begin position="583"/>
        <end position="594"/>
    </location>
</feature>
<feature type="compositionally biased region" description="Polar residues" evidence="4">
    <location>
        <begin position="595"/>
        <end position="604"/>
    </location>
</feature>
<feature type="compositionally biased region" description="Polar residues" evidence="4">
    <location>
        <begin position="660"/>
        <end position="673"/>
    </location>
</feature>
<feature type="compositionally biased region" description="Low complexity" evidence="4">
    <location>
        <begin position="674"/>
        <end position="694"/>
    </location>
</feature>
<feature type="compositionally biased region" description="Polar residues" evidence="4">
    <location>
        <begin position="800"/>
        <end position="814"/>
    </location>
</feature>
<feature type="compositionally biased region" description="Low complexity" evidence="4">
    <location>
        <begin position="834"/>
        <end position="848"/>
    </location>
</feature>
<feature type="compositionally biased region" description="Low complexity" evidence="4">
    <location>
        <begin position="855"/>
        <end position="865"/>
    </location>
</feature>
<feature type="site" description="KMT2A/MLL1 fusion point (in acute myeloid leukemia patient B)">
    <location>
        <position position="266"/>
    </location>
</feature>
<feature type="site" description="KMT2A/MLL1 fusion point (in acute myeloid leukemia patient C)">
    <location>
        <position position="627"/>
    </location>
</feature>
<feature type="site" description="KMT2A/MLL1 fusion point (in acute myeloid leukemia patient A)">
    <location>
        <position position="664"/>
    </location>
</feature>
<feature type="modified residue" description="Phosphoserine" evidence="21">
    <location>
        <position position="217"/>
    </location>
</feature>
<feature type="modified residue" description="Phosphoserine" evidence="21">
    <location>
        <position position="252"/>
    </location>
</feature>
<feature type="modified residue" description="Phosphoserine" evidence="21">
    <location>
        <position position="436"/>
    </location>
</feature>
<feature type="modified residue" description="Phosphoserine" evidence="1">
    <location>
        <position position="532"/>
    </location>
</feature>
<feature type="modified residue" description="Phosphoserine" evidence="20">
    <location>
        <position position="684"/>
    </location>
</feature>
<feature type="modified residue" description="Phosphoserine" evidence="20 21">
    <location>
        <position position="686"/>
    </location>
</feature>
<feature type="modified residue" description="Phosphoserine" evidence="21">
    <location>
        <position position="689"/>
    </location>
</feature>
<feature type="cross-link" description="Glycyl lysine isopeptide (Lys-Gly) (interchain with G-Cter in SUMO2)" evidence="22">
    <location>
        <position position="280"/>
    </location>
</feature>
<feature type="splice variant" id="VSP_044552" description="In isoform 3." evidence="12">
    <original>RCELCPHKDGALKRTDNGGWAHVVCALYIPEVQFANVSTMEPIVLQSVPHDRYNKTCYICDEQGRESKAATGACMTCNKHGCRQAFHVTCAQFAGLLCE</original>
    <variation>MVCNSCWLASSENVTPGYIEHHCACASPHPRCLVSNVPPVSGALMHCFWACLTTAAFFGPQSFTTCHMSFLVSRDILFYIYGFMPFISVVIWRFKKERW</variation>
    <location>
        <begin position="81"/>
        <end position="179"/>
    </location>
</feature>
<feature type="splice variant" id="VSP_043044" description="In isoform 2." evidence="12">
    <original>RCELCPHKDGALKRTDNGGWAHVVCALYIPEVQFANVSTMEPIVLQ</original>
    <variation>AESRSVAQAKVQWCDLSPLQPLLPGFKRFSCLSLPNGMQFLLVSLI</variation>
    <location>
        <begin position="81"/>
        <end position="126"/>
    </location>
</feature>
<feature type="splice variant" id="VSP_043045" description="In isoform 2." evidence="12">
    <location>
        <begin position="127"/>
        <end position="1068"/>
    </location>
</feature>
<feature type="splice variant" id="VSP_044553" description="In isoform 3." evidence="12">
    <location>
        <begin position="180"/>
        <end position="1068"/>
    </location>
</feature>
<feature type="splice variant" id="VSP_047517" description="In isoform 1." evidence="13">
    <original>N</original>
    <variation>NDRGDSSTLTKQELKFI</variation>
    <location>
        <position position="566"/>
    </location>
</feature>
<feature type="splice variant" id="VSP_047518" description="In isoform 1." evidence="13">
    <original>EQHQAFLYQLMQHHHQQHHQPELQQL</original>
    <variation>VHRHPHFTQLPPTHFSPSMEIMQVRK</variation>
    <location>
        <begin position="986"/>
        <end position="1011"/>
    </location>
</feature>
<feature type="splice variant" id="VSP_047519" description="In isoform 1." evidence="13">
    <location>
        <begin position="1012"/>
        <end position="1068"/>
    </location>
</feature>
<feature type="mutagenesis site" description="Does not affect interaction with histone H3." evidence="10">
    <original>I</original>
    <variation>A</variation>
    <location>
        <position position="22"/>
    </location>
</feature>
<feature type="mutagenesis site" description="Does not affect interaction with histone H3." evidence="10">
    <original>V</original>
    <variation>A</variation>
    <location>
        <position position="80"/>
    </location>
</feature>
<feature type="mutagenesis site" description="Impairs interaction with histone H3." evidence="10">
    <original>A</original>
    <variation>V</variation>
    <location>
        <position position="106"/>
    </location>
</feature>
<feature type="mutagenesis site" description="Impairs interaction with histone H3. Reduces association to chromatin. Does not rescued histone H3 'Lys-79' dimethylation (H3K79me2) levels in MLLT10-depleted cells. Does not rescued DOT1L-target genes in MLLT10-depleted cells." evidence="10">
    <original>L</original>
    <variation>A</variation>
    <location>
        <position position="107"/>
    </location>
</feature>
<feature type="mutagenesis site" description="Impairs interaction with histone H3." evidence="10">
    <original>I</original>
    <variation>A</variation>
    <location>
        <position position="109"/>
    </location>
</feature>
<feature type="mutagenesis site" description="Impairs interaction with histone H3." evidence="10">
    <original>F</original>
    <variation>A</variation>
    <location>
        <position position="114"/>
    </location>
</feature>
<feature type="mutagenesis site" description="Impairs interaction with histone H3." evidence="10">
    <original>M</original>
    <variation>A</variation>
    <location>
        <position position="120"/>
    </location>
</feature>
<feature type="mutagenesis site" description="Impairs interaction with histone H3." evidence="10">
    <original>E</original>
    <variation>A</variation>
    <location>
        <position position="179"/>
    </location>
</feature>
<feature type="mutagenesis site" description="Impairs interaction with histone H3." evidence="10">
    <original>Y</original>
    <variation>A</variation>
    <location>
        <position position="190"/>
    </location>
</feature>
<feature type="strand" evidence="23">
    <location>
        <begin position="26"/>
        <end position="29"/>
    </location>
</feature>
<feature type="strand" evidence="23">
    <location>
        <begin position="39"/>
        <end position="41"/>
    </location>
</feature>
<feature type="strand" evidence="23">
    <location>
        <begin position="50"/>
        <end position="52"/>
    </location>
</feature>
<feature type="helix" evidence="23">
    <location>
        <begin position="53"/>
        <end position="55"/>
    </location>
</feature>
<feature type="helix" evidence="23">
    <location>
        <begin position="69"/>
        <end position="72"/>
    </location>
</feature>
<feature type="strand" evidence="24">
    <location>
        <begin position="73"/>
        <end position="75"/>
    </location>
</feature>
<feature type="turn" evidence="23">
    <location>
        <begin position="77"/>
        <end position="79"/>
    </location>
</feature>
<feature type="strand" evidence="23">
    <location>
        <begin position="83"/>
        <end position="86"/>
    </location>
</feature>
<feature type="strand" evidence="23">
    <location>
        <begin position="89"/>
        <end position="95"/>
    </location>
</feature>
<feature type="strand" evidence="23">
    <location>
        <begin position="98"/>
        <end position="102"/>
    </location>
</feature>
<feature type="helix" evidence="23">
    <location>
        <begin position="103"/>
        <end position="108"/>
    </location>
</feature>
<feature type="strand" evidence="23">
    <location>
        <begin position="113"/>
        <end position="115"/>
    </location>
</feature>
<feature type="turn" evidence="23">
    <location>
        <begin position="117"/>
        <end position="120"/>
    </location>
</feature>
<feature type="strand" evidence="23">
    <location>
        <begin position="122"/>
        <end position="124"/>
    </location>
</feature>
<feature type="helix" evidence="23">
    <location>
        <begin position="130"/>
        <end position="132"/>
    </location>
</feature>
<feature type="helix" evidence="23">
    <location>
        <begin position="138"/>
        <end position="142"/>
    </location>
</feature>
<feature type="helix" evidence="23">
    <location>
        <begin position="146"/>
        <end position="148"/>
    </location>
</feature>
<feature type="strand" evidence="24">
    <location>
        <begin position="159"/>
        <end position="161"/>
    </location>
</feature>
<feature type="helix" evidence="23">
    <location>
        <begin position="168"/>
        <end position="174"/>
    </location>
</feature>
<feature type="strand" evidence="24">
    <location>
        <begin position="177"/>
        <end position="181"/>
    </location>
</feature>
<feature type="strand" evidence="24">
    <location>
        <begin position="183"/>
        <end position="186"/>
    </location>
</feature>
<feature type="strand" evidence="24">
    <location>
        <begin position="188"/>
        <end position="192"/>
    </location>
</feature>
<feature type="helix" evidence="23">
    <location>
        <begin position="195"/>
        <end position="199"/>
    </location>
</feature>
<feature type="helix" evidence="25">
    <location>
        <begin position="716"/>
        <end position="733"/>
    </location>
</feature>
<feature type="helix" evidence="25">
    <location>
        <begin position="738"/>
        <end position="778"/>
    </location>
</feature>
<evidence type="ECO:0000250" key="1">
    <source>
        <dbReference type="UniProtKB" id="O54826"/>
    </source>
</evidence>
<evidence type="ECO:0000255" key="2">
    <source>
        <dbReference type="PROSITE-ProRule" id="PRU00146"/>
    </source>
</evidence>
<evidence type="ECO:0000255" key="3">
    <source>
        <dbReference type="PROSITE-ProRule" id="PRU01146"/>
    </source>
</evidence>
<evidence type="ECO:0000256" key="4">
    <source>
        <dbReference type="SAM" id="MobiDB-lite"/>
    </source>
</evidence>
<evidence type="ECO:0000269" key="5">
    <source>
    </source>
</evidence>
<evidence type="ECO:0000269" key="6">
    <source>
    </source>
</evidence>
<evidence type="ECO:0000269" key="7">
    <source>
    </source>
</evidence>
<evidence type="ECO:0000269" key="8">
    <source>
    </source>
</evidence>
<evidence type="ECO:0000269" key="9">
    <source>
    </source>
</evidence>
<evidence type="ECO:0000269" key="10">
    <source>
    </source>
</evidence>
<evidence type="ECO:0000303" key="11">
    <source>
    </source>
</evidence>
<evidence type="ECO:0000303" key="12">
    <source>
    </source>
</evidence>
<evidence type="ECO:0000303" key="13">
    <source>
    </source>
</evidence>
<evidence type="ECO:0000305" key="14"/>
<evidence type="ECO:0000312" key="15">
    <source>
        <dbReference type="HGNC" id="HGNC:16063"/>
    </source>
</evidence>
<evidence type="ECO:0007744" key="16">
    <source>
        <dbReference type="PDB" id="5DAG"/>
    </source>
</evidence>
<evidence type="ECO:0007744" key="17">
    <source>
        <dbReference type="PDB" id="5DAH"/>
    </source>
</evidence>
<evidence type="ECO:0007744" key="18">
    <source>
        <dbReference type="PDB" id="6CKN"/>
    </source>
</evidence>
<evidence type="ECO:0007744" key="19">
    <source>
        <dbReference type="PDB" id="6CKO"/>
    </source>
</evidence>
<evidence type="ECO:0007744" key="20">
    <source>
    </source>
</evidence>
<evidence type="ECO:0007744" key="21">
    <source>
    </source>
</evidence>
<evidence type="ECO:0007744" key="22">
    <source>
    </source>
</evidence>
<evidence type="ECO:0007829" key="23">
    <source>
        <dbReference type="PDB" id="5DAG"/>
    </source>
</evidence>
<evidence type="ECO:0007829" key="24">
    <source>
        <dbReference type="PDB" id="5DAH"/>
    </source>
</evidence>
<evidence type="ECO:0007829" key="25">
    <source>
        <dbReference type="PDB" id="6CKO"/>
    </source>
</evidence>
<comment type="function">
    <text evidence="9 10">Probably involved in transcriptional regulation. In vitro or as fusion protein with KMT2A/MLL1 has transactivation activity. Binds to cruciform DNA. In cells, binding to unmodified histone H3 regulates DOT1L functions including histone H3 'Lys-79' dimethylation (H3K79me2) and gene activation (PubMed:26439302).</text>
</comment>
<comment type="subunit">
    <text evidence="6 7 8 9 10">Self-associates. Interacts with FSTL3 isoform 2; the interaction enhances MLLT10 in vitro transcriptional activity and self-association. Interacts with YEATS4. Interacts with SS18. Interacts with DOT1L; this interaction also occurs with the KMT2A/MLL1 fusion protein. Interacts with histone H3; interaction is necessary for MLLT10 binding to nucleosomes; interaction is inhibited by histone H3 'Lys-27' methylations (H3K27me1, H3K27me2 and H3K27me3) amd acetylation; interaction stabilizes association of MLLT10 at chromatin; interaction is essential for histone H3 'Lys-79' dimethylation (H3K79me2) (PubMed:26439302).</text>
</comment>
<comment type="interaction">
    <interactant intactId="EBI-1104952">
        <id>P55197</id>
    </interactant>
    <interactant intactId="EBI-491549">
        <id>P35222</id>
        <label>CTNNB1</label>
    </interactant>
    <organismsDiffer>false</organismsDiffer>
    <experiments>4</experiments>
</comment>
<comment type="interaction">
    <interactant intactId="EBI-12853322">
        <id>P55197-2</id>
    </interactant>
    <interactant intactId="EBI-12018822">
        <id>Q12951-2</id>
        <label>FOXI1</label>
    </interactant>
    <organismsDiffer>false</organismsDiffer>
    <experiments>3</experiments>
</comment>
<comment type="interaction">
    <interactant intactId="EBI-12853322">
        <id>P55197-2</id>
    </interactant>
    <interactant intactId="EBI-2798841">
        <id>P35680</id>
        <label>HNF1B</label>
    </interactant>
    <organismsDiffer>false</organismsDiffer>
    <experiments>3</experiments>
</comment>
<comment type="interaction">
    <interactant intactId="EBI-12853322">
        <id>P55197-2</id>
    </interactant>
    <interactant intactId="EBI-12197079">
        <id>P84074</id>
        <label>HPCA</label>
    </interactant>
    <organismsDiffer>false</organismsDiffer>
    <experiments>3</experiments>
</comment>
<comment type="interaction">
    <interactant intactId="EBI-12853322">
        <id>P55197-2</id>
    </interactant>
    <interactant intactId="EBI-749635">
        <id>P61601</id>
        <label>NCALD</label>
    </interactant>
    <organismsDiffer>false</organismsDiffer>
    <experiments>3</experiments>
</comment>
<comment type="interaction">
    <interactant intactId="EBI-12853322">
        <id>P55197-2</id>
    </interactant>
    <interactant intactId="EBI-11526590">
        <id>P14859-6</id>
        <label>POU2F1</label>
    </interactant>
    <organismsDiffer>false</organismsDiffer>
    <experiments>3</experiments>
</comment>
<comment type="interaction">
    <interactant intactId="EBI-12853322">
        <id>P55197-2</id>
    </interactant>
    <interactant intactId="EBI-12029004">
        <id>P78424</id>
        <label>POU6F2</label>
    </interactant>
    <organismsDiffer>false</organismsDiffer>
    <experiments>3</experiments>
</comment>
<comment type="interaction">
    <interactant intactId="EBI-12853322">
        <id>P55197-2</id>
    </interactant>
    <interactant intactId="EBI-740343">
        <id>Q93062-3</id>
        <label>RBPMS</label>
    </interactant>
    <organismsDiffer>false</organismsDiffer>
    <experiments>3</experiments>
</comment>
<comment type="interaction">
    <interactant intactId="EBI-12853322">
        <id>P55197-2</id>
    </interactant>
    <interactant intactId="EBI-11980193">
        <id>Q14119</id>
        <label>VEZF1</label>
    </interactant>
    <organismsDiffer>false</organismsDiffer>
    <experiments>3</experiments>
</comment>
<comment type="subcellular location">
    <subcellularLocation>
        <location evidence="5">Nucleus</location>
    </subcellularLocation>
</comment>
<comment type="alternative products">
    <event type="alternative splicing"/>
    <isoform>
        <id>P55197-4</id>
        <name>4</name>
        <sequence type="displayed"/>
    </isoform>
    <isoform>
        <id>P55197-1</id>
        <name>1</name>
        <sequence type="described" ref="VSP_047517 VSP_047518 VSP_047519"/>
    </isoform>
    <isoform>
        <id>P55197-2</id>
        <name>2</name>
        <sequence type="described" ref="VSP_043044 VSP_043045"/>
    </isoform>
    <isoform>
        <id>P55197-3</id>
        <name>3</name>
        <sequence type="described" ref="VSP_044552 VSP_044553"/>
    </isoform>
</comment>
<comment type="tissue specificity">
    <text>Expressed abundantly in testis.</text>
</comment>
<comment type="disease">
    <text>A chromosomal aberration involving MLLT10 is associated with acute leukemias. Translocation t(10;11)(p12;q23) with KMT2A/MLL1. The result is a rogue activator protein.</text>
</comment>
<comment type="disease">
    <text>A chromosomal aberration involving MLLT10 is associated with diffuse histiocytic lymphomas. Translocation t(10;11)(p13;q14) with PICALM.</text>
</comment>
<comment type="sequence caution" evidence="14">
    <conflict type="frameshift">
        <sequence resource="EMBL" id="BC129946"/>
    </conflict>
</comment>
<comment type="online information" name="Atlas of Genetics and Cytogenetics in Oncology and Haematology">
    <link uri="https://atlasgeneticsoncology.org/gene/4/AF10"/>
</comment>
<protein>
    <recommendedName>
        <fullName evidence="14">Protein AF-10</fullName>
    </recommendedName>
    <alternativeName>
        <fullName>ALL1-fused gene from chromosome 10 protein</fullName>
    </alternativeName>
</protein>
<organism>
    <name type="scientific">Homo sapiens</name>
    <name type="common">Human</name>
    <dbReference type="NCBI Taxonomy" id="9606"/>
    <lineage>
        <taxon>Eukaryota</taxon>
        <taxon>Metazoa</taxon>
        <taxon>Chordata</taxon>
        <taxon>Craniata</taxon>
        <taxon>Vertebrata</taxon>
        <taxon>Euteleostomi</taxon>
        <taxon>Mammalia</taxon>
        <taxon>Eutheria</taxon>
        <taxon>Euarchontoglires</taxon>
        <taxon>Primates</taxon>
        <taxon>Haplorrhini</taxon>
        <taxon>Catarrhini</taxon>
        <taxon>Hominidae</taxon>
        <taxon>Homo</taxon>
    </lineage>
</organism>
<sequence>MVSSDRPVSLEDEVSHSMKEMIGGCCVCSDERGWAENPLVYCDGHGCSVAVHQACYGIVQVPTGPWFCRKCESQERAARVRCELCPHKDGALKRTDNGGWAHVVCALYIPEVQFANVSTMEPIVLQSVPHDRYNKTCYICDEQGRESKAATGACMTCNKHGCRQAFHVTCAQFAGLLCEEEGNGADNVQYCGYCKYHFSKLKKSKRGSNRSYDQSLSDSSSHSQDKHHEKEKKKYKEKDKHKQKHKKQPEPSPALVPSLTVTTEKTYTSTSNNSISGSLKRLEDTTARFTNANFQEVSAHTSSGKDVSETRGSEGKGKKSSAHSSGQRGRKPGGGRNPGTTVSAASPFPQGSFSGTPGSVKSSSGSSVQSPQDFLSFTDSDLRNDSYSHSQQSSATKDVHKGESGSQEGGVNSFSTLIGLPSTSAVTSQPKSFENSPGDLGNSSLPTAGYKRAQTSGIEEETVKEKKRKGNKQSKHGPGRPKGNKNQENVSHLSVSSASPTSSVASAAGSITSSSLQKSPTLLRNGSLQSLSVGSSPVGSEISMQYRHDGACPTTTFSELLNAIHNGIYNSNDVAVSFPNVVSGSGSSTPVSSSHLPQQSSGHLQQVGALSPSAVSSAAPAVATTQANTLSGSSLSQAPSHMYGNRSNSSMAALIAQSENNQTDQDLGDNSRNLVGRGSSPRGSLSPRSPVSSLQIRYDQPGNSSLENLPPVAASIEQLLERQWSEGQQFLLEQGTPSDILGMLKSLHQLQVENRRLEEQIKNLTAKKERLQLLNAQLSVPFPTITANPSPSHQIHTFSAQTAPTTDSLNSSKSPHIGNSFLPDNSLPVLNQDLTSSGQSTSSSSALSTPPPAGQSPAQQGSGVSGVQQVNGVTVGALASGMQPVTSTIPAVSAVGGIIGALPGNQLAINGIVGALNGVMQTPVTMSQNPTPLTHTTVPPNATHPMPATLTNSASGLGLLSDQQRQILIHQQQFQQLLNSQQLTPEQHQAFLYQLMQHHHQQHHQPELQQLQIPGPTQIPINNLLAGTQAPPLHTATTNPFLTIHGDNASQKVARLSDKTGPVAQEKS</sequence>
<keyword id="KW-0002">3D-structure</keyword>
<keyword id="KW-0025">Alternative splicing</keyword>
<keyword id="KW-0160">Chromosomal rearrangement</keyword>
<keyword id="KW-0238">DNA-binding</keyword>
<keyword id="KW-1017">Isopeptide bond</keyword>
<keyword id="KW-0479">Metal-binding</keyword>
<keyword id="KW-0539">Nucleus</keyword>
<keyword id="KW-0597">Phosphoprotein</keyword>
<keyword id="KW-1267">Proteomics identification</keyword>
<keyword id="KW-0656">Proto-oncogene</keyword>
<keyword id="KW-1185">Reference proteome</keyword>
<keyword id="KW-0677">Repeat</keyword>
<keyword id="KW-0804">Transcription</keyword>
<keyword id="KW-0805">Transcription regulation</keyword>
<keyword id="KW-0832">Ubl conjugation</keyword>
<keyword id="KW-0862">Zinc</keyword>
<keyword id="KW-0863">Zinc-finger</keyword>
<reference key="1">
    <citation type="journal article" date="1995" name="Blood">
        <title>A novel class of zinc finger/leucine zipper genes identified from the molecular cloning of the t(10;11) translocation in acute leukemia.</title>
        <authorList>
            <person name="Chaplin T."/>
            <person name="Ayton P."/>
            <person name="Bernard O.A."/>
            <person name="Saha V."/>
            <person name="Della Valle V."/>
            <person name="Hillion J."/>
            <person name="Gregorini A."/>
            <person name="Lillington D."/>
            <person name="Berger R."/>
            <person name="Young B.D."/>
        </authorList>
    </citation>
    <scope>NUCLEOTIDE SEQUENCE [MRNA] (ISOFORM 1)</scope>
</reference>
<reference key="2">
    <citation type="journal article" date="2005" name="Cell">
        <title>hDOT1L links histone methylation to leukemogenesis.</title>
        <authorList>
            <person name="Okada Y."/>
            <person name="Feng Q."/>
            <person name="Lin Y."/>
            <person name="Jiang Q."/>
            <person name="Li Y."/>
            <person name="Coffield V.M."/>
            <person name="Su L."/>
            <person name="Xu G."/>
            <person name="Zhang Y."/>
        </authorList>
    </citation>
    <scope>NUCLEOTIDE SEQUENCE [MRNA] (ISOFORM 4)</scope>
    <scope>INTERACTION WITH DOT1L</scope>
</reference>
<reference key="3">
    <citation type="journal article" date="2004" name="Nature">
        <title>The DNA sequence and comparative analysis of human chromosome 10.</title>
        <authorList>
            <person name="Deloukas P."/>
            <person name="Earthrowl M.E."/>
            <person name="Grafham D.V."/>
            <person name="Rubenfield M."/>
            <person name="French L."/>
            <person name="Steward C.A."/>
            <person name="Sims S.K."/>
            <person name="Jones M.C."/>
            <person name="Searle S."/>
            <person name="Scott C."/>
            <person name="Howe K."/>
            <person name="Hunt S.E."/>
            <person name="Andrews T.D."/>
            <person name="Gilbert J.G.R."/>
            <person name="Swarbreck D."/>
            <person name="Ashurst J.L."/>
            <person name="Taylor A."/>
            <person name="Battles J."/>
            <person name="Bird C.P."/>
            <person name="Ainscough R."/>
            <person name="Almeida J.P."/>
            <person name="Ashwell R.I.S."/>
            <person name="Ambrose K.D."/>
            <person name="Babbage A.K."/>
            <person name="Bagguley C.L."/>
            <person name="Bailey J."/>
            <person name="Banerjee R."/>
            <person name="Bates K."/>
            <person name="Beasley H."/>
            <person name="Bray-Allen S."/>
            <person name="Brown A.J."/>
            <person name="Brown J.Y."/>
            <person name="Burford D.C."/>
            <person name="Burrill W."/>
            <person name="Burton J."/>
            <person name="Cahill P."/>
            <person name="Camire D."/>
            <person name="Carter N.P."/>
            <person name="Chapman J.C."/>
            <person name="Clark S.Y."/>
            <person name="Clarke G."/>
            <person name="Clee C.M."/>
            <person name="Clegg S."/>
            <person name="Corby N."/>
            <person name="Coulson A."/>
            <person name="Dhami P."/>
            <person name="Dutta I."/>
            <person name="Dunn M."/>
            <person name="Faulkner L."/>
            <person name="Frankish A."/>
            <person name="Frankland J.A."/>
            <person name="Garner P."/>
            <person name="Garnett J."/>
            <person name="Gribble S."/>
            <person name="Griffiths C."/>
            <person name="Grocock R."/>
            <person name="Gustafson E."/>
            <person name="Hammond S."/>
            <person name="Harley J.L."/>
            <person name="Hart E."/>
            <person name="Heath P.D."/>
            <person name="Ho T.P."/>
            <person name="Hopkins B."/>
            <person name="Horne J."/>
            <person name="Howden P.J."/>
            <person name="Huckle E."/>
            <person name="Hynds C."/>
            <person name="Johnson C."/>
            <person name="Johnson D."/>
            <person name="Kana A."/>
            <person name="Kay M."/>
            <person name="Kimberley A.M."/>
            <person name="Kershaw J.K."/>
            <person name="Kokkinaki M."/>
            <person name="Laird G.K."/>
            <person name="Lawlor S."/>
            <person name="Lee H.M."/>
            <person name="Leongamornlert D.A."/>
            <person name="Laird G."/>
            <person name="Lloyd C."/>
            <person name="Lloyd D.M."/>
            <person name="Loveland J."/>
            <person name="Lovell J."/>
            <person name="McLaren S."/>
            <person name="McLay K.E."/>
            <person name="McMurray A."/>
            <person name="Mashreghi-Mohammadi M."/>
            <person name="Matthews L."/>
            <person name="Milne S."/>
            <person name="Nickerson T."/>
            <person name="Nguyen M."/>
            <person name="Overton-Larty E."/>
            <person name="Palmer S.A."/>
            <person name="Pearce A.V."/>
            <person name="Peck A.I."/>
            <person name="Pelan S."/>
            <person name="Phillimore B."/>
            <person name="Porter K."/>
            <person name="Rice C.M."/>
            <person name="Rogosin A."/>
            <person name="Ross M.T."/>
            <person name="Sarafidou T."/>
            <person name="Sehra H.K."/>
            <person name="Shownkeen R."/>
            <person name="Skuce C.D."/>
            <person name="Smith M."/>
            <person name="Standring L."/>
            <person name="Sycamore N."/>
            <person name="Tester J."/>
            <person name="Thorpe A."/>
            <person name="Torcasso W."/>
            <person name="Tracey A."/>
            <person name="Tromans A."/>
            <person name="Tsolas J."/>
            <person name="Wall M."/>
            <person name="Walsh J."/>
            <person name="Wang H."/>
            <person name="Weinstock K."/>
            <person name="West A.P."/>
            <person name="Willey D.L."/>
            <person name="Whitehead S.L."/>
            <person name="Wilming L."/>
            <person name="Wray P.W."/>
            <person name="Young L."/>
            <person name="Chen Y."/>
            <person name="Lovering R.C."/>
            <person name="Moschonas N.K."/>
            <person name="Siebert R."/>
            <person name="Fechtel K."/>
            <person name="Bentley D."/>
            <person name="Durbin R.M."/>
            <person name="Hubbard T."/>
            <person name="Doucette-Stamm L."/>
            <person name="Beck S."/>
            <person name="Smith D.R."/>
            <person name="Rogers J."/>
        </authorList>
    </citation>
    <scope>NUCLEOTIDE SEQUENCE [LARGE SCALE GENOMIC DNA]</scope>
</reference>
<reference key="4">
    <citation type="journal article" date="2004" name="Genome Res.">
        <title>The status, quality, and expansion of the NIH full-length cDNA project: the Mammalian Gene Collection (MGC).</title>
        <authorList>
            <consortium name="The MGC Project Team"/>
        </authorList>
    </citation>
    <scope>NUCLEOTIDE SEQUENCE [LARGE SCALE MRNA] (ISOFORMS 2; 3 AND 4)</scope>
    <source>
        <tissue>Ovary</tissue>
        <tissue>Prostate</tissue>
    </source>
</reference>
<reference key="5">
    <citation type="journal article" date="2000" name="J. Mol. Biol.">
        <title>Biochemical analyses of the AF10 protein: the extended LAP/PHD-finger mediates oligomerisation.</title>
        <authorList>
            <person name="Linder B."/>
            <person name="Newman R."/>
            <person name="Jones L.K."/>
            <person name="Debernardi S."/>
            <person name="Young B.D."/>
            <person name="Freemont P."/>
            <person name="Verrijzer C.P."/>
            <person name="Saha V."/>
        </authorList>
    </citation>
    <scope>SELF-ASSOCIATION</scope>
    <scope>SUBCELLULAR LOCATION</scope>
    <scope>DNA-BINDING</scope>
</reference>
<reference key="6">
    <citation type="journal article" date="2001" name="Oncogene">
        <title>The synovial sarcoma associated protein SYT interacts with the acute leukemia associated protein AF10.</title>
        <authorList>
            <person name="de Bruijn D.R."/>
            <person name="dos Santos N.R."/>
            <person name="Thijssen J."/>
            <person name="Balemans M."/>
            <person name="Debernardi S."/>
            <person name="Linder B."/>
            <person name="Young B.D."/>
            <person name="Geurts van Kessel A."/>
        </authorList>
    </citation>
    <scope>INTERACTION WITH SS18</scope>
</reference>
<reference key="7">
    <citation type="journal article" date="2002" name="Blood">
        <title>The MLL fusion partner AF10 binds GAS41, a protein that interacts with the human SWI/SNF complex.</title>
        <authorList>
            <person name="Debernardi S."/>
            <person name="Bassini A."/>
            <person name="Jones L.K."/>
            <person name="Chaplin T."/>
            <person name="Linder B."/>
            <person name="de Bruijn D.R.H."/>
            <person name="Meese E."/>
            <person name="Young B.D."/>
        </authorList>
    </citation>
    <scope>INTERACTION WITH YEATS4</scope>
</reference>
<reference key="8">
    <citation type="journal article" date="2002" name="Blood">
        <title>The AF10 leucine zipper is required for leukemic transformation of myeloid progenitors by MLL-AF10.</title>
        <authorList>
            <person name="DiMartino J.F."/>
            <person name="Ayton P.M."/>
            <person name="Chen E.H."/>
            <person name="Naftzger C.C."/>
            <person name="Young B.D."/>
            <person name="Cleary M.L."/>
        </authorList>
    </citation>
    <scope>TRANSACTIVATION DOMAIN</scope>
</reference>
<reference key="9">
    <citation type="journal article" date="2007" name="Biol. Cell">
        <title>AF10-dependent transcription is enhanced by its interaction with FLRG.</title>
        <authorList>
            <person name="Forissier S."/>
            <person name="Razanajaona D."/>
            <person name="Ay A.S."/>
            <person name="Martel S."/>
            <person name="Bartholin L."/>
            <person name="Rimokh R."/>
        </authorList>
    </citation>
    <scope>FUNCTION</scope>
    <scope>SELF-ASSOCIATION</scope>
    <scope>INTERACTION WITH FSTL3</scope>
</reference>
<reference key="10">
    <citation type="journal article" date="2007" name="Science">
        <title>ATM and ATR substrate analysis reveals extensive protein networks responsive to DNA damage.</title>
        <authorList>
            <person name="Matsuoka S."/>
            <person name="Ballif B.A."/>
            <person name="Smogorzewska A."/>
            <person name="McDonald E.R. III"/>
            <person name="Hurov K.E."/>
            <person name="Luo J."/>
            <person name="Bakalarski C.E."/>
            <person name="Zhao Z."/>
            <person name="Solimini N."/>
            <person name="Lerenthal Y."/>
            <person name="Shiloh Y."/>
            <person name="Gygi S.P."/>
            <person name="Elledge S.J."/>
        </authorList>
    </citation>
    <scope>IDENTIFICATION BY MASS SPECTROMETRY [LARGE SCALE ANALYSIS]</scope>
    <source>
        <tissue>Embryonic kidney</tissue>
    </source>
</reference>
<reference key="11">
    <citation type="journal article" date="2008" name="Proc. Natl. Acad. Sci. U.S.A.">
        <title>A quantitative atlas of mitotic phosphorylation.</title>
        <authorList>
            <person name="Dephoure N."/>
            <person name="Zhou C."/>
            <person name="Villen J."/>
            <person name="Beausoleil S.A."/>
            <person name="Bakalarski C.E."/>
            <person name="Elledge S.J."/>
            <person name="Gygi S.P."/>
        </authorList>
    </citation>
    <scope>PHOSPHORYLATION [LARGE SCALE ANALYSIS] AT SER-684 AND SER-686</scope>
    <scope>IDENTIFICATION BY MASS SPECTROMETRY [LARGE SCALE ANALYSIS]</scope>
    <source>
        <tissue>Cervix carcinoma</tissue>
    </source>
</reference>
<reference key="12">
    <citation type="journal article" date="2009" name="Anal. Chem.">
        <title>Lys-N and trypsin cover complementary parts of the phosphoproteome in a refined SCX-based approach.</title>
        <authorList>
            <person name="Gauci S."/>
            <person name="Helbig A.O."/>
            <person name="Slijper M."/>
            <person name="Krijgsveld J."/>
            <person name="Heck A.J."/>
            <person name="Mohammed S."/>
        </authorList>
    </citation>
    <scope>IDENTIFICATION BY MASS SPECTROMETRY [LARGE SCALE ANALYSIS]</scope>
</reference>
<reference key="13">
    <citation type="journal article" date="2009" name="Sci. Signal.">
        <title>Quantitative phosphoproteomic analysis of T cell receptor signaling reveals system-wide modulation of protein-protein interactions.</title>
        <authorList>
            <person name="Mayya V."/>
            <person name="Lundgren D.H."/>
            <person name="Hwang S.-I."/>
            <person name="Rezaul K."/>
            <person name="Wu L."/>
            <person name="Eng J.K."/>
            <person name="Rodionov V."/>
            <person name="Han D.K."/>
        </authorList>
    </citation>
    <scope>IDENTIFICATION BY MASS SPECTROMETRY [LARGE SCALE ANALYSIS]</scope>
    <source>
        <tissue>Leukemic T-cell</tissue>
    </source>
</reference>
<reference key="14">
    <citation type="journal article" date="2010" name="Sci. Signal.">
        <title>Quantitative phosphoproteomics reveals widespread full phosphorylation site occupancy during mitosis.</title>
        <authorList>
            <person name="Olsen J.V."/>
            <person name="Vermeulen M."/>
            <person name="Santamaria A."/>
            <person name="Kumar C."/>
            <person name="Miller M.L."/>
            <person name="Jensen L.J."/>
            <person name="Gnad F."/>
            <person name="Cox J."/>
            <person name="Jensen T.S."/>
            <person name="Nigg E.A."/>
            <person name="Brunak S."/>
            <person name="Mann M."/>
        </authorList>
    </citation>
    <scope>IDENTIFICATION BY MASS SPECTROMETRY [LARGE SCALE ANALYSIS]</scope>
    <source>
        <tissue>Cervix carcinoma</tissue>
    </source>
</reference>
<reference key="15">
    <citation type="journal article" date="2013" name="J. Proteome Res.">
        <title>Toward a comprehensive characterization of a human cancer cell phosphoproteome.</title>
        <authorList>
            <person name="Zhou H."/>
            <person name="Di Palma S."/>
            <person name="Preisinger C."/>
            <person name="Peng M."/>
            <person name="Polat A.N."/>
            <person name="Heck A.J."/>
            <person name="Mohammed S."/>
        </authorList>
    </citation>
    <scope>PHOSPHORYLATION [LARGE SCALE ANALYSIS] AT SER-217; SER-252; SER-436; SER-686 AND SER-689</scope>
    <scope>IDENTIFICATION BY MASS SPECTROMETRY [LARGE SCALE ANALYSIS]</scope>
    <source>
        <tissue>Cervix carcinoma</tissue>
        <tissue>Erythroleukemia</tissue>
    </source>
</reference>
<reference key="16">
    <citation type="journal article" date="2014" name="Nat. Struct. Mol. Biol.">
        <title>Uncovering global SUMOylation signaling networks in a site-specific manner.</title>
        <authorList>
            <person name="Hendriks I.A."/>
            <person name="D'Souza R.C."/>
            <person name="Yang B."/>
            <person name="Verlaan-de Vries M."/>
            <person name="Mann M."/>
            <person name="Vertegaal A.C."/>
        </authorList>
    </citation>
    <scope>SUMOYLATION [LARGE SCALE ANALYSIS] AT LYS-280</scope>
    <scope>IDENTIFICATION BY MASS SPECTROMETRY [LARGE SCALE ANALYSIS]</scope>
</reference>
<reference evidence="16 17" key="17">
    <citation type="journal article" date="2015" name="Mol. Cell">
        <title>The PZP Domain of AF10 Senses Unmodified H3K27 to Regulate DOT1L-Mediated Methylation of H3K79.</title>
        <authorList>
            <person name="Chen S."/>
            <person name="Yang Z."/>
            <person name="Wilkinson A.W."/>
            <person name="Deshpande A.J."/>
            <person name="Sidoli S."/>
            <person name="Krajewski K."/>
            <person name="Strahl B.D."/>
            <person name="Garcia B.A."/>
            <person name="Armstrong S.A."/>
            <person name="Patel D.J."/>
            <person name="Gozani O."/>
        </authorList>
    </citation>
    <scope>X-RAY CRYSTALLOGRAPHY (1.60 ANGSTROMS) OF 1-208 IN COMPLEX WITH HISTONE H3 PEPTIDE AND ZINC</scope>
    <scope>INTERACTION WITH HISTONE H3</scope>
    <scope>MUTAGENESIS OF ILE-22; VAL-80; ALA-106; LEU-107; ILE-109; PHE-114; MET-120; GLU-179 AND TYR-190</scope>
    <scope>FUNCTION</scope>
    <scope>REGION</scope>
</reference>
<reference evidence="18 19" key="18">
    <citation type="submission" date="2018-02" db="PDB data bank">
        <title>Crystal structure of an AF10 fragment.</title>
        <authorList>
            <person name="Zhang H."/>
            <person name="Tempel W."/>
            <person name="Bountra C."/>
            <person name="Arrowsmith C.H."/>
            <person name="Edwards A.M."/>
            <person name="Min J."/>
        </authorList>
    </citation>
    <scope>X-RAY CRYSTALLOGRAPHY (2.00 ANGSTROMS) OF 704-779</scope>
</reference>
<accession>P55197</accession>
<accession>B1ANA8</accession>
<accession>Q5JT37</accession>
<accession>Q5VX90</accession>
<accession>Q66K63</accession>
<proteinExistence type="evidence at protein level"/>
<name>AF10_HUMAN</name>